<feature type="chain" id="PRO_0000289204" description="Pre-mRNA-splicing factor SLU7-B">
    <location>
        <begin position="1"/>
        <end position="536"/>
    </location>
</feature>
<feature type="zinc finger region" description="CCHC-type" evidence="3">
    <location>
        <begin position="96"/>
        <end position="109"/>
    </location>
</feature>
<feature type="region of interest" description="Disordered" evidence="5">
    <location>
        <begin position="1"/>
        <end position="42"/>
    </location>
</feature>
<feature type="region of interest" description="Disordered" evidence="5">
    <location>
        <begin position="176"/>
        <end position="201"/>
    </location>
</feature>
<feature type="region of interest" description="Disordered" evidence="5">
    <location>
        <begin position="488"/>
        <end position="507"/>
    </location>
</feature>
<feature type="short sequence motif" description="Nuclear localization signal" evidence="4">
    <location>
        <begin position="486"/>
        <end position="493"/>
    </location>
</feature>
<feature type="compositionally biased region" description="Basic and acidic residues" evidence="5">
    <location>
        <begin position="9"/>
        <end position="25"/>
    </location>
</feature>
<feature type="compositionally biased region" description="Acidic residues" evidence="5">
    <location>
        <begin position="187"/>
        <end position="200"/>
    </location>
</feature>
<feature type="compositionally biased region" description="Basic and acidic residues" evidence="5">
    <location>
        <begin position="488"/>
        <end position="501"/>
    </location>
</feature>
<feature type="modified residue" description="Phosphoserine" evidence="2">
    <location>
        <position position="193"/>
    </location>
</feature>
<proteinExistence type="evidence at protein level"/>
<reference key="1">
    <citation type="journal article" date="1998" name="Nature">
        <title>Analysis of 1.9 Mb of contiguous sequence from chromosome 4 of Arabidopsis thaliana.</title>
        <authorList>
            <person name="Bevan M."/>
            <person name="Bancroft I."/>
            <person name="Bent E."/>
            <person name="Love K."/>
            <person name="Goodman H.M."/>
            <person name="Dean C."/>
            <person name="Bergkamp R."/>
            <person name="Dirkse W."/>
            <person name="van Staveren M."/>
            <person name="Stiekema W."/>
            <person name="Drost L."/>
            <person name="Ridley P."/>
            <person name="Hudson S.-A."/>
            <person name="Patel K."/>
            <person name="Murphy G."/>
            <person name="Piffanelli P."/>
            <person name="Wedler H."/>
            <person name="Wedler E."/>
            <person name="Wambutt R."/>
            <person name="Weitzenegger T."/>
            <person name="Pohl T."/>
            <person name="Terryn N."/>
            <person name="Gielen J."/>
            <person name="Villarroel R."/>
            <person name="De Clercq R."/>
            <person name="van Montagu M."/>
            <person name="Lecharny A."/>
            <person name="Aubourg S."/>
            <person name="Gy I."/>
            <person name="Kreis M."/>
            <person name="Lao N."/>
            <person name="Kavanagh T."/>
            <person name="Hempel S."/>
            <person name="Kotter P."/>
            <person name="Entian K.-D."/>
            <person name="Rieger M."/>
            <person name="Schaefer M."/>
            <person name="Funk B."/>
            <person name="Mueller-Auer S."/>
            <person name="Silvey M."/>
            <person name="James R."/>
            <person name="Monfort A."/>
            <person name="Pons A."/>
            <person name="Puigdomenech P."/>
            <person name="Douka A."/>
            <person name="Voukelatou E."/>
            <person name="Milioni D."/>
            <person name="Hatzopoulos P."/>
            <person name="Piravandi E."/>
            <person name="Obermaier B."/>
            <person name="Hilbert H."/>
            <person name="Duesterhoeft A."/>
            <person name="Moores T."/>
            <person name="Jones J.D.G."/>
            <person name="Eneva T."/>
            <person name="Palme K."/>
            <person name="Benes V."/>
            <person name="Rechmann S."/>
            <person name="Ansorge W."/>
            <person name="Cooke R."/>
            <person name="Berger C."/>
            <person name="Delseny M."/>
            <person name="Voet M."/>
            <person name="Volckaert G."/>
            <person name="Mewes H.-W."/>
            <person name="Klosterman S."/>
            <person name="Schueller C."/>
            <person name="Chalwatzis N."/>
        </authorList>
    </citation>
    <scope>NUCLEOTIDE SEQUENCE [LARGE SCALE GENOMIC DNA]</scope>
    <source>
        <strain>cv. Columbia</strain>
    </source>
</reference>
<reference key="2">
    <citation type="journal article" date="1999" name="Nature">
        <title>Sequence and analysis of chromosome 4 of the plant Arabidopsis thaliana.</title>
        <authorList>
            <person name="Mayer K.F.X."/>
            <person name="Schueller C."/>
            <person name="Wambutt R."/>
            <person name="Murphy G."/>
            <person name="Volckaert G."/>
            <person name="Pohl T."/>
            <person name="Duesterhoeft A."/>
            <person name="Stiekema W."/>
            <person name="Entian K.-D."/>
            <person name="Terryn N."/>
            <person name="Harris B."/>
            <person name="Ansorge W."/>
            <person name="Brandt P."/>
            <person name="Grivell L.A."/>
            <person name="Rieger M."/>
            <person name="Weichselgartner M."/>
            <person name="de Simone V."/>
            <person name="Obermaier B."/>
            <person name="Mache R."/>
            <person name="Mueller M."/>
            <person name="Kreis M."/>
            <person name="Delseny M."/>
            <person name="Puigdomenech P."/>
            <person name="Watson M."/>
            <person name="Schmidtheini T."/>
            <person name="Reichert B."/>
            <person name="Portetelle D."/>
            <person name="Perez-Alonso M."/>
            <person name="Boutry M."/>
            <person name="Bancroft I."/>
            <person name="Vos P."/>
            <person name="Hoheisel J."/>
            <person name="Zimmermann W."/>
            <person name="Wedler H."/>
            <person name="Ridley P."/>
            <person name="Langham S.-A."/>
            <person name="McCullagh B."/>
            <person name="Bilham L."/>
            <person name="Robben J."/>
            <person name="van der Schueren J."/>
            <person name="Grymonprez B."/>
            <person name="Chuang Y.-J."/>
            <person name="Vandenbussche F."/>
            <person name="Braeken M."/>
            <person name="Weltjens I."/>
            <person name="Voet M."/>
            <person name="Bastiaens I."/>
            <person name="Aert R."/>
            <person name="Defoor E."/>
            <person name="Weitzenegger T."/>
            <person name="Bothe G."/>
            <person name="Ramsperger U."/>
            <person name="Hilbert H."/>
            <person name="Braun M."/>
            <person name="Holzer E."/>
            <person name="Brandt A."/>
            <person name="Peters S."/>
            <person name="van Staveren M."/>
            <person name="Dirkse W."/>
            <person name="Mooijman P."/>
            <person name="Klein Lankhorst R."/>
            <person name="Rose M."/>
            <person name="Hauf J."/>
            <person name="Koetter P."/>
            <person name="Berneiser S."/>
            <person name="Hempel S."/>
            <person name="Feldpausch M."/>
            <person name="Lamberth S."/>
            <person name="Van den Daele H."/>
            <person name="De Keyser A."/>
            <person name="Buysshaert C."/>
            <person name="Gielen J."/>
            <person name="Villarroel R."/>
            <person name="De Clercq R."/>
            <person name="van Montagu M."/>
            <person name="Rogers J."/>
            <person name="Cronin A."/>
            <person name="Quail M.A."/>
            <person name="Bray-Allen S."/>
            <person name="Clark L."/>
            <person name="Doggett J."/>
            <person name="Hall S."/>
            <person name="Kay M."/>
            <person name="Lennard N."/>
            <person name="McLay K."/>
            <person name="Mayes R."/>
            <person name="Pettett A."/>
            <person name="Rajandream M.A."/>
            <person name="Lyne M."/>
            <person name="Benes V."/>
            <person name="Rechmann S."/>
            <person name="Borkova D."/>
            <person name="Bloecker H."/>
            <person name="Scharfe M."/>
            <person name="Grimm M."/>
            <person name="Loehnert T.-H."/>
            <person name="Dose S."/>
            <person name="de Haan M."/>
            <person name="Maarse A.C."/>
            <person name="Schaefer M."/>
            <person name="Mueller-Auer S."/>
            <person name="Gabel C."/>
            <person name="Fuchs M."/>
            <person name="Fartmann B."/>
            <person name="Granderath K."/>
            <person name="Dauner D."/>
            <person name="Herzl A."/>
            <person name="Neumann S."/>
            <person name="Argiriou A."/>
            <person name="Vitale D."/>
            <person name="Liguori R."/>
            <person name="Piravandi E."/>
            <person name="Massenet O."/>
            <person name="Quigley F."/>
            <person name="Clabauld G."/>
            <person name="Muendlein A."/>
            <person name="Felber R."/>
            <person name="Schnabl S."/>
            <person name="Hiller R."/>
            <person name="Schmidt W."/>
            <person name="Lecharny A."/>
            <person name="Aubourg S."/>
            <person name="Chefdor F."/>
            <person name="Cooke R."/>
            <person name="Berger C."/>
            <person name="Monfort A."/>
            <person name="Casacuberta E."/>
            <person name="Gibbons T."/>
            <person name="Weber N."/>
            <person name="Vandenbol M."/>
            <person name="Bargues M."/>
            <person name="Terol J."/>
            <person name="Torres A."/>
            <person name="Perez-Perez A."/>
            <person name="Purnelle B."/>
            <person name="Bent E."/>
            <person name="Johnson S."/>
            <person name="Tacon D."/>
            <person name="Jesse T."/>
            <person name="Heijnen L."/>
            <person name="Schwarz S."/>
            <person name="Scholler P."/>
            <person name="Heber S."/>
            <person name="Francs P."/>
            <person name="Bielke C."/>
            <person name="Frishman D."/>
            <person name="Haase D."/>
            <person name="Lemcke K."/>
            <person name="Mewes H.-W."/>
            <person name="Stocker S."/>
            <person name="Zaccaria P."/>
            <person name="Bevan M."/>
            <person name="Wilson R.K."/>
            <person name="de la Bastide M."/>
            <person name="Habermann K."/>
            <person name="Parnell L."/>
            <person name="Dedhia N."/>
            <person name="Gnoj L."/>
            <person name="Schutz K."/>
            <person name="Huang E."/>
            <person name="Spiegel L."/>
            <person name="Sekhon M."/>
            <person name="Murray J."/>
            <person name="Sheet P."/>
            <person name="Cordes M."/>
            <person name="Abu-Threideh J."/>
            <person name="Stoneking T."/>
            <person name="Kalicki J."/>
            <person name="Graves T."/>
            <person name="Harmon G."/>
            <person name="Edwards J."/>
            <person name="Latreille P."/>
            <person name="Courtney L."/>
            <person name="Cloud J."/>
            <person name="Abbott A."/>
            <person name="Scott K."/>
            <person name="Johnson D."/>
            <person name="Minx P."/>
            <person name="Bentley D."/>
            <person name="Fulton B."/>
            <person name="Miller N."/>
            <person name="Greco T."/>
            <person name="Kemp K."/>
            <person name="Kramer J."/>
            <person name="Fulton L."/>
            <person name="Mardis E."/>
            <person name="Dante M."/>
            <person name="Pepin K."/>
            <person name="Hillier L.W."/>
            <person name="Nelson J."/>
            <person name="Spieth J."/>
            <person name="Ryan E."/>
            <person name="Andrews S."/>
            <person name="Geisel C."/>
            <person name="Layman D."/>
            <person name="Du H."/>
            <person name="Ali J."/>
            <person name="Berghoff A."/>
            <person name="Jones K."/>
            <person name="Drone K."/>
            <person name="Cotton M."/>
            <person name="Joshu C."/>
            <person name="Antonoiu B."/>
            <person name="Zidanic M."/>
            <person name="Strong C."/>
            <person name="Sun H."/>
            <person name="Lamar B."/>
            <person name="Yordan C."/>
            <person name="Ma P."/>
            <person name="Zhong J."/>
            <person name="Preston R."/>
            <person name="Vil D."/>
            <person name="Shekher M."/>
            <person name="Matero A."/>
            <person name="Shah R."/>
            <person name="Swaby I.K."/>
            <person name="O'Shaughnessy A."/>
            <person name="Rodriguez M."/>
            <person name="Hoffman J."/>
            <person name="Till S."/>
            <person name="Granat S."/>
            <person name="Shohdy N."/>
            <person name="Hasegawa A."/>
            <person name="Hameed A."/>
            <person name="Lodhi M."/>
            <person name="Johnson A."/>
            <person name="Chen E."/>
            <person name="Marra M.A."/>
            <person name="Martienssen R."/>
            <person name="McCombie W.R."/>
        </authorList>
    </citation>
    <scope>NUCLEOTIDE SEQUENCE [LARGE SCALE GENOMIC DNA]</scope>
    <source>
        <strain>cv. Columbia</strain>
    </source>
</reference>
<reference key="3">
    <citation type="journal article" date="2017" name="Plant J.">
        <title>Araport11: a complete reannotation of the Arabidopsis thaliana reference genome.</title>
        <authorList>
            <person name="Cheng C.Y."/>
            <person name="Krishnakumar V."/>
            <person name="Chan A.P."/>
            <person name="Thibaud-Nissen F."/>
            <person name="Schobel S."/>
            <person name="Town C.D."/>
        </authorList>
    </citation>
    <scope>GENOME REANNOTATION</scope>
    <source>
        <strain>cv. Columbia</strain>
    </source>
</reference>
<reference key="4">
    <citation type="journal article" date="2003" name="Science">
        <title>Empirical analysis of transcriptional activity in the Arabidopsis genome.</title>
        <authorList>
            <person name="Yamada K."/>
            <person name="Lim J."/>
            <person name="Dale J.M."/>
            <person name="Chen H."/>
            <person name="Shinn P."/>
            <person name="Palm C.J."/>
            <person name="Southwick A.M."/>
            <person name="Wu H.C."/>
            <person name="Kim C.J."/>
            <person name="Nguyen M."/>
            <person name="Pham P.K."/>
            <person name="Cheuk R.F."/>
            <person name="Karlin-Newmann G."/>
            <person name="Liu S.X."/>
            <person name="Lam B."/>
            <person name="Sakano H."/>
            <person name="Wu T."/>
            <person name="Yu G."/>
            <person name="Miranda M."/>
            <person name="Quach H.L."/>
            <person name="Tripp M."/>
            <person name="Chang C.H."/>
            <person name="Lee J.M."/>
            <person name="Toriumi M.J."/>
            <person name="Chan M.M."/>
            <person name="Tang C.C."/>
            <person name="Onodera C.S."/>
            <person name="Deng J.M."/>
            <person name="Akiyama K."/>
            <person name="Ansari Y."/>
            <person name="Arakawa T."/>
            <person name="Banh J."/>
            <person name="Banno F."/>
            <person name="Bowser L."/>
            <person name="Brooks S.Y."/>
            <person name="Carninci P."/>
            <person name="Chao Q."/>
            <person name="Choy N."/>
            <person name="Enju A."/>
            <person name="Goldsmith A.D."/>
            <person name="Gurjal M."/>
            <person name="Hansen N.F."/>
            <person name="Hayashizaki Y."/>
            <person name="Johnson-Hopson C."/>
            <person name="Hsuan V.W."/>
            <person name="Iida K."/>
            <person name="Karnes M."/>
            <person name="Khan S."/>
            <person name="Koesema E."/>
            <person name="Ishida J."/>
            <person name="Jiang P.X."/>
            <person name="Jones T."/>
            <person name="Kawai J."/>
            <person name="Kamiya A."/>
            <person name="Meyers C."/>
            <person name="Nakajima M."/>
            <person name="Narusaka M."/>
            <person name="Seki M."/>
            <person name="Sakurai T."/>
            <person name="Satou M."/>
            <person name="Tamse R."/>
            <person name="Vaysberg M."/>
            <person name="Wallender E.K."/>
            <person name="Wong C."/>
            <person name="Yamamura Y."/>
            <person name="Yuan S."/>
            <person name="Shinozaki K."/>
            <person name="Davis R.W."/>
            <person name="Theologis A."/>
            <person name="Ecker J.R."/>
        </authorList>
    </citation>
    <scope>NUCLEOTIDE SEQUENCE [LARGE SCALE MRNA]</scope>
    <source>
        <strain>cv. Columbia</strain>
    </source>
</reference>
<reference key="5">
    <citation type="journal article" date="2005" name="Plant Cell">
        <title>The recessive epigenetic swellmap mutation affects the expression of two step II splicing factors required for the transcription of the cell proliferation gene STRUWWELPETER and for the timing of cell cycle arrest in the Arabidopsis leaf.</title>
        <authorList>
            <person name="Clay N.K."/>
            <person name="Nelson T."/>
        </authorList>
    </citation>
    <scope>FUNCTION</scope>
    <scope>DISRUPTION PHENOTYPE</scope>
    <source>
        <strain>cv. Columbia</strain>
        <strain>cv. Landsberg erecta</strain>
    </source>
</reference>
<reference key="6">
    <citation type="journal article" date="2022" name="Front. Plant Sci.">
        <title>SWELLMAP 2, a phyB-interacting splicing factor, negatively regulates seedling photomorphogenesis in Arabidopsis.</title>
        <authorList>
            <person name="Yan T."/>
            <person name="Heng Y."/>
            <person name="Wang W."/>
            <person name="Li J."/>
            <person name="Deng X.W."/>
        </authorList>
    </citation>
    <scope>FUNCTION</scope>
    <scope>DISRUPTION PHENOTYPE</scope>
    <scope>INTERACTION WITH PHYB</scope>
    <scope>SUBCELLULAR LOCATION</scope>
    <source>
        <strain>cv. Columbia</strain>
    </source>
</reference>
<comment type="function">
    <text evidence="1 6 7">Participates in the second catalytic step of pre-mRNA splicing, when the free hydroxyl group of exon I attacks the 3'-splice site to generate spliced mRNA and the excised lariat intron (By similarity). Splicing factor acting as a negative regulator of seedling photomorphogenesis by antagonizing PHYB signaling to promote light-induced hypocotyl elongation (PubMed:35222493). Prevents the accumulation of functionally spliced RVE8a form, a circadian clock regulator mediating the transcriptional activation of clock genes containing evening elements (EE), but promotes PIF4 expression to fine-tune hypocotyl elongation in the light (PubMed:35222493). Together with SMP1, involved in the timing of cell cycle arrest during leaf development, in a STRUWWELPETER (SWP) dependent manner; promotes cell proliferation in developing organs (PubMed:15937226).</text>
</comment>
<comment type="subunit">
    <text evidence="7">Interacts with PHYB in photobodies under red light.</text>
</comment>
<comment type="subcellular location">
    <subcellularLocation>
        <location evidence="4 7">Nucleus</location>
    </subcellularLocation>
    <text evidence="7">Colocalizes with PHYB in photobodies after light exposure, subnuclear light-induced structures.</text>
</comment>
<comment type="disruption phenotype">
    <text evidence="6 7">Reduced hypocotyls elongation when grown in continuous white, red, far-red and blue light conditions associated with a depression of PIF4 peak amplitude (PubMed:35222493). Increased accumulation of spliced RVE8a form, but reduced production of spliced RVE8b form (PubMed:35222493). Plants lacking both SMP2 and PHYB have short hypocotyls (PubMed:35222493). Reduced organ size due to lower cell number and reduced fertility (PubMed:15937226). Cell proliferation is arrested precociously in organ primordia (PubMed:15937226). Altered expression of splicing factors required for the transcription of the cell proliferation gene STRUWWELPETER (SWP) and for the timing of cell cycle arrest in leaves (PubMed:15937226). Double mutants smp1-1 smp2-1 are not viable at the gametophytic and/or embryo stage (PubMed:15937226).</text>
</comment>
<comment type="similarity">
    <text evidence="10">Belongs to the SLU7 family.</text>
</comment>
<comment type="sequence caution" evidence="10">
    <conflict type="erroneous gene model prediction">
        <sequence resource="EMBL-CDS" id="CAB16783"/>
    </conflict>
</comment>
<comment type="sequence caution" evidence="10">
    <conflict type="erroneous gene model prediction">
        <sequence resource="EMBL-CDS" id="CAB80378"/>
    </conflict>
</comment>
<accession>O23174</accession>
<accession>Q93ZP2</accession>
<dbReference type="EMBL" id="Z99707">
    <property type="protein sequence ID" value="CAB16783.1"/>
    <property type="status" value="ALT_SEQ"/>
    <property type="molecule type" value="Genomic_DNA"/>
</dbReference>
<dbReference type="EMBL" id="AL161590">
    <property type="protein sequence ID" value="CAB80378.1"/>
    <property type="status" value="ALT_SEQ"/>
    <property type="molecule type" value="Genomic_DNA"/>
</dbReference>
<dbReference type="EMBL" id="CP002687">
    <property type="protein sequence ID" value="AEE86756.1"/>
    <property type="molecule type" value="Genomic_DNA"/>
</dbReference>
<dbReference type="EMBL" id="AY056418">
    <property type="protein sequence ID" value="AAL08274.1"/>
    <property type="molecule type" value="mRNA"/>
</dbReference>
<dbReference type="PIR" id="E85438">
    <property type="entry name" value="E85438"/>
</dbReference>
<dbReference type="RefSeq" id="NP_568017.1">
    <property type="nucleotide sequence ID" value="NM_119875.4"/>
</dbReference>
<dbReference type="SMR" id="O23174"/>
<dbReference type="BioGRID" id="15147">
    <property type="interactions" value="1"/>
</dbReference>
<dbReference type="FunCoup" id="O23174">
    <property type="interactions" value="4344"/>
</dbReference>
<dbReference type="STRING" id="3702.O23174"/>
<dbReference type="iPTMnet" id="O23174"/>
<dbReference type="PaxDb" id="3702-AT4G37120.1"/>
<dbReference type="ProteomicsDB" id="234538"/>
<dbReference type="EnsemblPlants" id="AT4G37120.1">
    <property type="protein sequence ID" value="AT4G37120.1"/>
    <property type="gene ID" value="AT4G37120"/>
</dbReference>
<dbReference type="GeneID" id="829866"/>
<dbReference type="Gramene" id="AT4G37120.1">
    <property type="protein sequence ID" value="AT4G37120.1"/>
    <property type="gene ID" value="AT4G37120"/>
</dbReference>
<dbReference type="KEGG" id="ath:AT4G37120"/>
<dbReference type="Araport" id="AT4G37120"/>
<dbReference type="TAIR" id="AT4G37120">
    <property type="gene designation" value="SMP2"/>
</dbReference>
<dbReference type="eggNOG" id="KOG2560">
    <property type="taxonomic scope" value="Eukaryota"/>
</dbReference>
<dbReference type="HOGENOM" id="CLU_019317_3_1_1"/>
<dbReference type="InParanoid" id="O23174"/>
<dbReference type="OMA" id="YISDAPW"/>
<dbReference type="OrthoDB" id="249612at2759"/>
<dbReference type="PhylomeDB" id="O23174"/>
<dbReference type="PRO" id="PR:O23174"/>
<dbReference type="Proteomes" id="UP000006548">
    <property type="component" value="Chromosome 4"/>
</dbReference>
<dbReference type="ExpressionAtlas" id="O23174">
    <property type="expression patterns" value="baseline and differential"/>
</dbReference>
<dbReference type="GO" id="GO:0005634">
    <property type="term" value="C:nucleus"/>
    <property type="evidence" value="ECO:0000314"/>
    <property type="project" value="UniProtKB"/>
</dbReference>
<dbReference type="GO" id="GO:0005681">
    <property type="term" value="C:spliceosomal complex"/>
    <property type="evidence" value="ECO:0007669"/>
    <property type="project" value="UniProtKB-KW"/>
</dbReference>
<dbReference type="GO" id="GO:0030628">
    <property type="term" value="F:pre-mRNA 3'-splice site binding"/>
    <property type="evidence" value="ECO:0007669"/>
    <property type="project" value="InterPro"/>
</dbReference>
<dbReference type="GO" id="GO:0003727">
    <property type="term" value="F:single-stranded RNA binding"/>
    <property type="evidence" value="ECO:0000304"/>
    <property type="project" value="TAIR"/>
</dbReference>
<dbReference type="GO" id="GO:0008270">
    <property type="term" value="F:zinc ion binding"/>
    <property type="evidence" value="ECO:0007669"/>
    <property type="project" value="UniProtKB-KW"/>
</dbReference>
<dbReference type="GO" id="GO:0000398">
    <property type="term" value="P:mRNA splicing, via spliceosome"/>
    <property type="evidence" value="ECO:0007669"/>
    <property type="project" value="InterPro"/>
</dbReference>
<dbReference type="GO" id="GO:1900140">
    <property type="term" value="P:regulation of seedling development"/>
    <property type="evidence" value="ECO:0000315"/>
    <property type="project" value="UniProtKB"/>
</dbReference>
<dbReference type="GO" id="GO:0009637">
    <property type="term" value="P:response to blue light"/>
    <property type="evidence" value="ECO:0000315"/>
    <property type="project" value="UniProtKB"/>
</dbReference>
<dbReference type="GO" id="GO:0010218">
    <property type="term" value="P:response to far red light"/>
    <property type="evidence" value="ECO:0000315"/>
    <property type="project" value="UniProtKB"/>
</dbReference>
<dbReference type="GO" id="GO:0009416">
    <property type="term" value="P:response to light stimulus"/>
    <property type="evidence" value="ECO:0000314"/>
    <property type="project" value="UniProtKB"/>
</dbReference>
<dbReference type="GO" id="GO:0010114">
    <property type="term" value="P:response to red light"/>
    <property type="evidence" value="ECO:0000315"/>
    <property type="project" value="UniProtKB"/>
</dbReference>
<dbReference type="GO" id="GO:0008380">
    <property type="term" value="P:RNA splicing"/>
    <property type="evidence" value="ECO:0000304"/>
    <property type="project" value="TAIR"/>
</dbReference>
<dbReference type="InterPro" id="IPR021715">
    <property type="entry name" value="Slu7_dom"/>
</dbReference>
<dbReference type="InterPro" id="IPR039974">
    <property type="entry name" value="Splicing_factor_SLU7"/>
</dbReference>
<dbReference type="PANTHER" id="PTHR12942:SF2">
    <property type="entry name" value="PRE-MRNA-SPLICING FACTOR SLU7"/>
    <property type="match status" value="1"/>
</dbReference>
<dbReference type="PANTHER" id="PTHR12942">
    <property type="entry name" value="STEP II SPLICING FACTOR SLU7"/>
    <property type="match status" value="1"/>
</dbReference>
<dbReference type="Pfam" id="PF11708">
    <property type="entry name" value="Slu7"/>
    <property type="match status" value="1"/>
</dbReference>
<sequence length="536" mass="62056">MATASVAFKSREDHRKKLELEEARKAGLAPAEVDEDGKEINPHIPEYMSKAPWYLKSEQPSLKHQKNWKIEPEPKKIWYDRGKKIYQAEQYRKGACINCGAMTHSSKACMDRPRKIGAKYTNMNIAADEKIESFELDYDGKRDRWNGYDTSTYRHVVDRYDAKEEARKKYLKEQQLKKLEEKNNNENGDDATSDGEEDLDDLRVDEAKVDESRQMDFAKVEKRVRTTGGGSTGTVRNLRIREDTAKYLLNLDVNSAHYDPKTRSMREDPLPDADPNEKFYLGDNQYRNSGQALEFKQINIHSCEAFDKGHDMHMQAAPSQAELLYKNFKVAKEKLKTQTKDTIMEKYGNAATEGEIPMELLLGQSERQIEYDRAGRIMKGQEVIIPKSKYEEDVHANNHTSVWGSWWKDHQWGYKCCQQTIRNSYCTGSAGIEAAEASIDLMKANIARKEASKESPKKVEEKKMATWGTDIPEDLELNEEALANALKKEDLSRREEKDERKRKYNVNYTNDVTSEEMEAYRMKRVHHEDPMRNFPG</sequence>
<name>SLU7B_ARATH</name>
<protein>
    <recommendedName>
        <fullName>Pre-mRNA-splicing factor SLU7-B</fullName>
    </recommendedName>
    <alternativeName>
        <fullName evidence="10">Protein DOMINANT COP1-6 SUPPRESSOR 5</fullName>
    </alternativeName>
    <alternativeName>
        <fullName evidence="8 9">Protein SWELLMAP 2</fullName>
    </alternativeName>
</protein>
<evidence type="ECO:0000250" key="1">
    <source>
        <dbReference type="UniProtKB" id="O95391"/>
    </source>
</evidence>
<evidence type="ECO:0000250" key="2">
    <source>
        <dbReference type="UniProtKB" id="Q9SHY8"/>
    </source>
</evidence>
<evidence type="ECO:0000255" key="3">
    <source>
        <dbReference type="PROSITE-ProRule" id="PRU00047"/>
    </source>
</evidence>
<evidence type="ECO:0000255" key="4">
    <source>
        <dbReference type="PROSITE-ProRule" id="PRU00768"/>
    </source>
</evidence>
<evidence type="ECO:0000256" key="5">
    <source>
        <dbReference type="SAM" id="MobiDB-lite"/>
    </source>
</evidence>
<evidence type="ECO:0000269" key="6">
    <source>
    </source>
</evidence>
<evidence type="ECO:0000269" key="7">
    <source>
    </source>
</evidence>
<evidence type="ECO:0000303" key="8">
    <source>
    </source>
</evidence>
<evidence type="ECO:0000303" key="9">
    <source>
    </source>
</evidence>
<evidence type="ECO:0000305" key="10"/>
<evidence type="ECO:0000312" key="11">
    <source>
        <dbReference type="Araport" id="AT4G37120"/>
    </source>
</evidence>
<evidence type="ECO:0000312" key="12">
    <source>
        <dbReference type="EMBL" id="CAB16783.1"/>
    </source>
</evidence>
<organism>
    <name type="scientific">Arabidopsis thaliana</name>
    <name type="common">Mouse-ear cress</name>
    <dbReference type="NCBI Taxonomy" id="3702"/>
    <lineage>
        <taxon>Eukaryota</taxon>
        <taxon>Viridiplantae</taxon>
        <taxon>Streptophyta</taxon>
        <taxon>Embryophyta</taxon>
        <taxon>Tracheophyta</taxon>
        <taxon>Spermatophyta</taxon>
        <taxon>Magnoliopsida</taxon>
        <taxon>eudicotyledons</taxon>
        <taxon>Gunneridae</taxon>
        <taxon>Pentapetalae</taxon>
        <taxon>rosids</taxon>
        <taxon>malvids</taxon>
        <taxon>Brassicales</taxon>
        <taxon>Brassicaceae</taxon>
        <taxon>Camelineae</taxon>
        <taxon>Arabidopsis</taxon>
    </lineage>
</organism>
<keyword id="KW-0479">Metal-binding</keyword>
<keyword id="KW-0507">mRNA processing</keyword>
<keyword id="KW-0508">mRNA splicing</keyword>
<keyword id="KW-0539">Nucleus</keyword>
<keyword id="KW-0597">Phosphoprotein</keyword>
<keyword id="KW-1185">Reference proteome</keyword>
<keyword id="KW-0747">Spliceosome</keyword>
<keyword id="KW-0862">Zinc</keyword>
<keyword id="KW-0863">Zinc-finger</keyword>
<gene>
    <name evidence="8 9" type="primary">SMP2</name>
    <name evidence="10" type="synonym">DCS5</name>
    <name evidence="11" type="ordered locus">At4g37120</name>
    <name type="ORF">AP22.39</name>
    <name evidence="12" type="ORF">C7A10.240</name>
</gene>